<comment type="function">
    <text evidence="1">Catalyzes the cyclization of GTP to (8S)-3',8-cyclo-7,8-dihydroguanosine 5'-triphosphate.</text>
</comment>
<comment type="catalytic activity">
    <reaction evidence="1">
        <text>GTP + AH2 + S-adenosyl-L-methionine = (8S)-3',8-cyclo-7,8-dihydroguanosine 5'-triphosphate + 5'-deoxyadenosine + L-methionine + A + H(+)</text>
        <dbReference type="Rhea" id="RHEA:49576"/>
        <dbReference type="ChEBI" id="CHEBI:13193"/>
        <dbReference type="ChEBI" id="CHEBI:15378"/>
        <dbReference type="ChEBI" id="CHEBI:17319"/>
        <dbReference type="ChEBI" id="CHEBI:17499"/>
        <dbReference type="ChEBI" id="CHEBI:37565"/>
        <dbReference type="ChEBI" id="CHEBI:57844"/>
        <dbReference type="ChEBI" id="CHEBI:59789"/>
        <dbReference type="ChEBI" id="CHEBI:131766"/>
        <dbReference type="EC" id="4.1.99.22"/>
    </reaction>
</comment>
<comment type="cofactor">
    <cofactor evidence="1">
        <name>[4Fe-4S] cluster</name>
        <dbReference type="ChEBI" id="CHEBI:49883"/>
    </cofactor>
    <text evidence="1">Binds 2 [4Fe-4S] clusters. Binds 1 [4Fe-4S] cluster coordinated with 3 cysteines and an exchangeable S-adenosyl-L-methionine and 1 [4Fe-4S] cluster coordinated with 3 cysteines and the GTP-derived substrate.</text>
</comment>
<comment type="pathway">
    <text evidence="1">Cofactor biosynthesis; molybdopterin biosynthesis.</text>
</comment>
<comment type="subunit">
    <text evidence="1">Monomer and homodimer.</text>
</comment>
<comment type="similarity">
    <text evidence="1">Belongs to the radical SAM superfamily. MoaA family.</text>
</comment>
<reference key="1">
    <citation type="journal article" date="2011" name="Appl. Environ. Microbiol.">
        <title>Genomic potential of Marinobacter aquaeolei, a biogeochemical 'opportunitroph'.</title>
        <authorList>
            <person name="Singer E."/>
            <person name="Webb E.A."/>
            <person name="Nelson W.C."/>
            <person name="Heidelberg J.F."/>
            <person name="Ivanova N."/>
            <person name="Pati A."/>
            <person name="Edwards K.J."/>
        </authorList>
    </citation>
    <scope>NUCLEOTIDE SEQUENCE [LARGE SCALE GENOMIC DNA]</scope>
    <source>
        <strain>ATCC 700491 / DSM 11845 / VT8</strain>
    </source>
</reference>
<feature type="chain" id="PRO_1000054199" description="GTP 3',8-cyclase">
    <location>
        <begin position="1"/>
        <end position="330"/>
    </location>
</feature>
<feature type="domain" description="Radical SAM core" evidence="2">
    <location>
        <begin position="9"/>
        <end position="225"/>
    </location>
</feature>
<feature type="binding site" evidence="1">
    <location>
        <position position="18"/>
    </location>
    <ligand>
        <name>GTP</name>
        <dbReference type="ChEBI" id="CHEBI:37565"/>
    </ligand>
</feature>
<feature type="binding site" evidence="1">
    <location>
        <position position="25"/>
    </location>
    <ligand>
        <name>[4Fe-4S] cluster</name>
        <dbReference type="ChEBI" id="CHEBI:49883"/>
        <label>1</label>
        <note>4Fe-4S-S-AdoMet</note>
    </ligand>
</feature>
<feature type="binding site" evidence="1">
    <location>
        <position position="29"/>
    </location>
    <ligand>
        <name>[4Fe-4S] cluster</name>
        <dbReference type="ChEBI" id="CHEBI:49883"/>
        <label>1</label>
        <note>4Fe-4S-S-AdoMet</note>
    </ligand>
</feature>
<feature type="binding site" evidence="1">
    <location>
        <position position="31"/>
    </location>
    <ligand>
        <name>S-adenosyl-L-methionine</name>
        <dbReference type="ChEBI" id="CHEBI:59789"/>
    </ligand>
</feature>
<feature type="binding site" evidence="1">
    <location>
        <position position="32"/>
    </location>
    <ligand>
        <name>[4Fe-4S] cluster</name>
        <dbReference type="ChEBI" id="CHEBI:49883"/>
        <label>1</label>
        <note>4Fe-4S-S-AdoMet</note>
    </ligand>
</feature>
<feature type="binding site" evidence="1">
    <location>
        <position position="67"/>
    </location>
    <ligand>
        <name>GTP</name>
        <dbReference type="ChEBI" id="CHEBI:37565"/>
    </ligand>
</feature>
<feature type="binding site" evidence="1">
    <location>
        <position position="71"/>
    </location>
    <ligand>
        <name>S-adenosyl-L-methionine</name>
        <dbReference type="ChEBI" id="CHEBI:59789"/>
    </ligand>
</feature>
<feature type="binding site" evidence="1">
    <location>
        <position position="97"/>
    </location>
    <ligand>
        <name>GTP</name>
        <dbReference type="ChEBI" id="CHEBI:37565"/>
    </ligand>
</feature>
<feature type="binding site" evidence="1">
    <location>
        <position position="121"/>
    </location>
    <ligand>
        <name>S-adenosyl-L-methionine</name>
        <dbReference type="ChEBI" id="CHEBI:59789"/>
    </ligand>
</feature>
<feature type="binding site" evidence="1">
    <location>
        <position position="158"/>
    </location>
    <ligand>
        <name>GTP</name>
        <dbReference type="ChEBI" id="CHEBI:37565"/>
    </ligand>
</feature>
<feature type="binding site" evidence="1">
    <location>
        <position position="192"/>
    </location>
    <ligand>
        <name>S-adenosyl-L-methionine</name>
        <dbReference type="ChEBI" id="CHEBI:59789"/>
    </ligand>
</feature>
<feature type="binding site" evidence="1">
    <location>
        <position position="256"/>
    </location>
    <ligand>
        <name>[4Fe-4S] cluster</name>
        <dbReference type="ChEBI" id="CHEBI:49883"/>
        <label>2</label>
        <note>4Fe-4S-substrate</note>
    </ligand>
</feature>
<feature type="binding site" evidence="1">
    <location>
        <position position="259"/>
    </location>
    <ligand>
        <name>[4Fe-4S] cluster</name>
        <dbReference type="ChEBI" id="CHEBI:49883"/>
        <label>2</label>
        <note>4Fe-4S-substrate</note>
    </ligand>
</feature>
<feature type="binding site" evidence="1">
    <location>
        <begin position="261"/>
        <end position="263"/>
    </location>
    <ligand>
        <name>GTP</name>
        <dbReference type="ChEBI" id="CHEBI:37565"/>
    </ligand>
</feature>
<feature type="binding site" evidence="1">
    <location>
        <position position="273"/>
    </location>
    <ligand>
        <name>[4Fe-4S] cluster</name>
        <dbReference type="ChEBI" id="CHEBI:49883"/>
        <label>2</label>
        <note>4Fe-4S-substrate</note>
    </ligand>
</feature>
<name>MOAA_MARN8</name>
<gene>
    <name evidence="1" type="primary">moaA</name>
    <name type="ordered locus">Maqu_3073</name>
</gene>
<evidence type="ECO:0000255" key="1">
    <source>
        <dbReference type="HAMAP-Rule" id="MF_01225"/>
    </source>
</evidence>
<evidence type="ECO:0000255" key="2">
    <source>
        <dbReference type="PROSITE-ProRule" id="PRU01266"/>
    </source>
</evidence>
<proteinExistence type="inferred from homology"/>
<organism>
    <name type="scientific">Marinobacter nauticus (strain ATCC 700491 / DSM 11845 / VT8)</name>
    <name type="common">Marinobacter aquaeolei</name>
    <dbReference type="NCBI Taxonomy" id="351348"/>
    <lineage>
        <taxon>Bacteria</taxon>
        <taxon>Pseudomonadati</taxon>
        <taxon>Pseudomonadota</taxon>
        <taxon>Gammaproteobacteria</taxon>
        <taxon>Pseudomonadales</taxon>
        <taxon>Marinobacteraceae</taxon>
        <taxon>Marinobacter</taxon>
    </lineage>
</organism>
<accession>A1U578</accession>
<dbReference type="EC" id="4.1.99.22" evidence="1"/>
<dbReference type="EMBL" id="CP000514">
    <property type="protein sequence ID" value="ABM20147.1"/>
    <property type="molecule type" value="Genomic_DNA"/>
</dbReference>
<dbReference type="RefSeq" id="WP_011786515.1">
    <property type="nucleotide sequence ID" value="NC_008740.1"/>
</dbReference>
<dbReference type="SMR" id="A1U578"/>
<dbReference type="STRING" id="351348.Maqu_3073"/>
<dbReference type="KEGG" id="maq:Maqu_3073"/>
<dbReference type="eggNOG" id="COG2896">
    <property type="taxonomic scope" value="Bacteria"/>
</dbReference>
<dbReference type="HOGENOM" id="CLU_009273_0_1_6"/>
<dbReference type="OrthoDB" id="9763993at2"/>
<dbReference type="UniPathway" id="UPA00344"/>
<dbReference type="Proteomes" id="UP000000998">
    <property type="component" value="Chromosome"/>
</dbReference>
<dbReference type="GO" id="GO:0051539">
    <property type="term" value="F:4 iron, 4 sulfur cluster binding"/>
    <property type="evidence" value="ECO:0007669"/>
    <property type="project" value="UniProtKB-UniRule"/>
</dbReference>
<dbReference type="GO" id="GO:0061799">
    <property type="term" value="F:cyclic pyranopterin monophosphate synthase activity"/>
    <property type="evidence" value="ECO:0007669"/>
    <property type="project" value="TreeGrafter"/>
</dbReference>
<dbReference type="GO" id="GO:0061798">
    <property type="term" value="F:GTP 3',8'-cyclase activity"/>
    <property type="evidence" value="ECO:0007669"/>
    <property type="project" value="UniProtKB-UniRule"/>
</dbReference>
<dbReference type="GO" id="GO:0005525">
    <property type="term" value="F:GTP binding"/>
    <property type="evidence" value="ECO:0007669"/>
    <property type="project" value="UniProtKB-UniRule"/>
</dbReference>
<dbReference type="GO" id="GO:0046872">
    <property type="term" value="F:metal ion binding"/>
    <property type="evidence" value="ECO:0007669"/>
    <property type="project" value="UniProtKB-KW"/>
</dbReference>
<dbReference type="GO" id="GO:1904047">
    <property type="term" value="F:S-adenosyl-L-methionine binding"/>
    <property type="evidence" value="ECO:0007669"/>
    <property type="project" value="UniProtKB-UniRule"/>
</dbReference>
<dbReference type="GO" id="GO:0006777">
    <property type="term" value="P:Mo-molybdopterin cofactor biosynthetic process"/>
    <property type="evidence" value="ECO:0007669"/>
    <property type="project" value="UniProtKB-UniRule"/>
</dbReference>
<dbReference type="CDD" id="cd01335">
    <property type="entry name" value="Radical_SAM"/>
    <property type="match status" value="1"/>
</dbReference>
<dbReference type="CDD" id="cd21117">
    <property type="entry name" value="Twitch_MoaA"/>
    <property type="match status" value="1"/>
</dbReference>
<dbReference type="Gene3D" id="3.20.20.70">
    <property type="entry name" value="Aldolase class I"/>
    <property type="match status" value="1"/>
</dbReference>
<dbReference type="HAMAP" id="MF_01225_B">
    <property type="entry name" value="MoaA_B"/>
    <property type="match status" value="1"/>
</dbReference>
<dbReference type="InterPro" id="IPR013785">
    <property type="entry name" value="Aldolase_TIM"/>
</dbReference>
<dbReference type="InterPro" id="IPR006638">
    <property type="entry name" value="Elp3/MiaA/NifB-like_rSAM"/>
</dbReference>
<dbReference type="InterPro" id="IPR013483">
    <property type="entry name" value="MoaA"/>
</dbReference>
<dbReference type="InterPro" id="IPR000385">
    <property type="entry name" value="MoaA_NifB_PqqE_Fe-S-bd_CS"/>
</dbReference>
<dbReference type="InterPro" id="IPR010505">
    <property type="entry name" value="MoaA_twitch"/>
</dbReference>
<dbReference type="InterPro" id="IPR050105">
    <property type="entry name" value="MoCo_biosynth_MoaA/MoaC"/>
</dbReference>
<dbReference type="InterPro" id="IPR007197">
    <property type="entry name" value="rSAM"/>
</dbReference>
<dbReference type="NCBIfam" id="TIGR02666">
    <property type="entry name" value="moaA"/>
    <property type="match status" value="1"/>
</dbReference>
<dbReference type="NCBIfam" id="NF001199">
    <property type="entry name" value="PRK00164.2-1"/>
    <property type="match status" value="1"/>
</dbReference>
<dbReference type="PANTHER" id="PTHR22960:SF0">
    <property type="entry name" value="MOLYBDENUM COFACTOR BIOSYNTHESIS PROTEIN 1"/>
    <property type="match status" value="1"/>
</dbReference>
<dbReference type="PANTHER" id="PTHR22960">
    <property type="entry name" value="MOLYBDOPTERIN COFACTOR SYNTHESIS PROTEIN A"/>
    <property type="match status" value="1"/>
</dbReference>
<dbReference type="Pfam" id="PF13353">
    <property type="entry name" value="Fer4_12"/>
    <property type="match status" value="1"/>
</dbReference>
<dbReference type="Pfam" id="PF06463">
    <property type="entry name" value="Mob_synth_C"/>
    <property type="match status" value="1"/>
</dbReference>
<dbReference type="Pfam" id="PF04055">
    <property type="entry name" value="Radical_SAM"/>
    <property type="match status" value="1"/>
</dbReference>
<dbReference type="SFLD" id="SFLDG01383">
    <property type="entry name" value="cyclic_pyranopterin_phosphate"/>
    <property type="match status" value="1"/>
</dbReference>
<dbReference type="SFLD" id="SFLDG01216">
    <property type="entry name" value="thioether_bond_formation_requi"/>
    <property type="match status" value="1"/>
</dbReference>
<dbReference type="SMART" id="SM00729">
    <property type="entry name" value="Elp3"/>
    <property type="match status" value="1"/>
</dbReference>
<dbReference type="SUPFAM" id="SSF102114">
    <property type="entry name" value="Radical SAM enzymes"/>
    <property type="match status" value="1"/>
</dbReference>
<dbReference type="PROSITE" id="PS01305">
    <property type="entry name" value="MOAA_NIFB_PQQE"/>
    <property type="match status" value="1"/>
</dbReference>
<dbReference type="PROSITE" id="PS51918">
    <property type="entry name" value="RADICAL_SAM"/>
    <property type="match status" value="1"/>
</dbReference>
<protein>
    <recommendedName>
        <fullName evidence="1">GTP 3',8-cyclase</fullName>
        <ecNumber evidence="1">4.1.99.22</ecNumber>
    </recommendedName>
    <alternativeName>
        <fullName evidence="1">Molybdenum cofactor biosynthesis protein A</fullName>
    </alternativeName>
</protein>
<keyword id="KW-0004">4Fe-4S</keyword>
<keyword id="KW-0342">GTP-binding</keyword>
<keyword id="KW-0408">Iron</keyword>
<keyword id="KW-0411">Iron-sulfur</keyword>
<keyword id="KW-0456">Lyase</keyword>
<keyword id="KW-0479">Metal-binding</keyword>
<keyword id="KW-0501">Molybdenum cofactor biosynthesis</keyword>
<keyword id="KW-0547">Nucleotide-binding</keyword>
<keyword id="KW-0949">S-adenosyl-L-methionine</keyword>
<sequence length="330" mass="37367">MPQTRLTDRFGRTVNYVRLSVTDRCDFRCVYCMAEDMTFLPRQQVLTLEEIARLARNFVALGTEKIRLTGGEPLVRRDILELVREVGTYGLRDFAMTTNGSQLPTMAESLRKAGLQRLNISLDSLDADKFRAITRTGNLSQVLDGIDAARDAGFRGIKLNTVVMKGRNDEEIPELIEFARQKQVDISFIEEMPLGEISEHDRGLALCTSEEVRDIIRRHHELIPATEDSGGPARYFRMPDSEVRVGFISPHSHNFCSTCNRVRVTVEGRLLLCLGNEHSVDLRRVLRGHPVTDDKLQEAIIKAMDLKPERHHFSSNGDVQILRFMNTTGG</sequence>